<reference key="1">
    <citation type="journal article" date="2005" name="J. Bacteriol.">
        <title>Genomic sequence of an otitis media isolate of nontypeable Haemophilus influenzae: comparative study with H. influenzae serotype d, strain KW20.</title>
        <authorList>
            <person name="Harrison A."/>
            <person name="Dyer D.W."/>
            <person name="Gillaspy A."/>
            <person name="Ray W.C."/>
            <person name="Mungur R."/>
            <person name="Carson M.B."/>
            <person name="Zhong H."/>
            <person name="Gipson J."/>
            <person name="Gipson M."/>
            <person name="Johnson L.S."/>
            <person name="Lewis L."/>
            <person name="Bakaletz L.O."/>
            <person name="Munson R.S. Jr."/>
        </authorList>
    </citation>
    <scope>NUCLEOTIDE SEQUENCE [LARGE SCALE GENOMIC DNA]</scope>
    <source>
        <strain>86-028NP</strain>
    </source>
</reference>
<evidence type="ECO:0000255" key="1">
    <source>
        <dbReference type="HAMAP-Rule" id="MF_00022"/>
    </source>
</evidence>
<sequence>MKLDAPFNLDPNVKVRTRFAPSPTGYLHVGGARTALYSWLYAKHNNGEFVLRIEDTDLERSTPEATAAIIEGMEWLNLPWEHGPYYQTKRFDRYNQVIDEMIEQGLAYRCYCTKEHLEELRHTQEQNKEKPRYDRHCLHDHNHSPDEPHVVRFKNPTEGSVVFDDAVRGRIEISNSELDDLIIRRTDGSPTYNFCVVVDDWDMGITHVVRGEDHINNTPRQINILKAIGAPIPTYAHVSMINGDDGQKLSKRHGAVSVMQYRDDGYLPEALINYLVRLGWGHGDQEIFSREEMINYFELDHVSKSASAFNTEKLQWLNQHYIRELPPEYVAKHLEWHYKDQSIDTSNGPALTDIVSMLAERCKTLKEMASSSRYFFEEFETFDEAAAKKHFKGNAAEALAKVKEKLTALSSWNLHSIHEAIEQTAAELEVGMGKVGMPLRVAVTGSGQSPSMDVTLVGIGRDRVLVRIQRAIDFIHAQNA</sequence>
<dbReference type="EC" id="6.1.1.17" evidence="1"/>
<dbReference type="EMBL" id="CP000057">
    <property type="protein sequence ID" value="AAX87332.1"/>
    <property type="molecule type" value="Genomic_DNA"/>
</dbReference>
<dbReference type="RefSeq" id="WP_011271958.1">
    <property type="nucleotide sequence ID" value="NC_007146.2"/>
</dbReference>
<dbReference type="SMR" id="Q4QNR5"/>
<dbReference type="GeneID" id="93219217"/>
<dbReference type="KEGG" id="hit:NTHI0382"/>
<dbReference type="HOGENOM" id="CLU_015768_6_3_6"/>
<dbReference type="Proteomes" id="UP000002525">
    <property type="component" value="Chromosome"/>
</dbReference>
<dbReference type="GO" id="GO:0005829">
    <property type="term" value="C:cytosol"/>
    <property type="evidence" value="ECO:0007669"/>
    <property type="project" value="TreeGrafter"/>
</dbReference>
<dbReference type="GO" id="GO:0005524">
    <property type="term" value="F:ATP binding"/>
    <property type="evidence" value="ECO:0007669"/>
    <property type="project" value="UniProtKB-UniRule"/>
</dbReference>
<dbReference type="GO" id="GO:0004818">
    <property type="term" value="F:glutamate-tRNA ligase activity"/>
    <property type="evidence" value="ECO:0007669"/>
    <property type="project" value="UniProtKB-UniRule"/>
</dbReference>
<dbReference type="GO" id="GO:0000049">
    <property type="term" value="F:tRNA binding"/>
    <property type="evidence" value="ECO:0007669"/>
    <property type="project" value="InterPro"/>
</dbReference>
<dbReference type="GO" id="GO:0008270">
    <property type="term" value="F:zinc ion binding"/>
    <property type="evidence" value="ECO:0007669"/>
    <property type="project" value="InterPro"/>
</dbReference>
<dbReference type="GO" id="GO:0006424">
    <property type="term" value="P:glutamyl-tRNA aminoacylation"/>
    <property type="evidence" value="ECO:0007669"/>
    <property type="project" value="UniProtKB-UniRule"/>
</dbReference>
<dbReference type="CDD" id="cd00808">
    <property type="entry name" value="GluRS_core"/>
    <property type="match status" value="1"/>
</dbReference>
<dbReference type="FunFam" id="1.10.10.350:FF:000015">
    <property type="entry name" value="Glutamate--tRNA ligase"/>
    <property type="match status" value="1"/>
</dbReference>
<dbReference type="FunFam" id="3.40.50.620:FF:000007">
    <property type="entry name" value="Glutamate--tRNA ligase"/>
    <property type="match status" value="1"/>
</dbReference>
<dbReference type="Gene3D" id="1.10.10.350">
    <property type="match status" value="1"/>
</dbReference>
<dbReference type="Gene3D" id="3.40.50.620">
    <property type="entry name" value="HUPs"/>
    <property type="match status" value="1"/>
</dbReference>
<dbReference type="HAMAP" id="MF_00022">
    <property type="entry name" value="Glu_tRNA_synth_type1"/>
    <property type="match status" value="1"/>
</dbReference>
<dbReference type="InterPro" id="IPR045462">
    <property type="entry name" value="aa-tRNA-synth_I_cd-bd"/>
</dbReference>
<dbReference type="InterPro" id="IPR020751">
    <property type="entry name" value="aa-tRNA-synth_I_codon-bd_sub2"/>
</dbReference>
<dbReference type="InterPro" id="IPR001412">
    <property type="entry name" value="aa-tRNA-synth_I_CS"/>
</dbReference>
<dbReference type="InterPro" id="IPR008925">
    <property type="entry name" value="aa_tRNA-synth_I_cd-bd_sf"/>
</dbReference>
<dbReference type="InterPro" id="IPR004527">
    <property type="entry name" value="Glu-tRNA-ligase_bac/mito"/>
</dbReference>
<dbReference type="InterPro" id="IPR000924">
    <property type="entry name" value="Glu/Gln-tRNA-synth"/>
</dbReference>
<dbReference type="InterPro" id="IPR020058">
    <property type="entry name" value="Glu/Gln-tRNA-synth_Ib_cat-dom"/>
</dbReference>
<dbReference type="InterPro" id="IPR049940">
    <property type="entry name" value="GluQ/Sye"/>
</dbReference>
<dbReference type="InterPro" id="IPR033910">
    <property type="entry name" value="GluRS_core"/>
</dbReference>
<dbReference type="InterPro" id="IPR014729">
    <property type="entry name" value="Rossmann-like_a/b/a_fold"/>
</dbReference>
<dbReference type="NCBIfam" id="TIGR00464">
    <property type="entry name" value="gltX_bact"/>
    <property type="match status" value="1"/>
</dbReference>
<dbReference type="PANTHER" id="PTHR43311">
    <property type="entry name" value="GLUTAMATE--TRNA LIGASE"/>
    <property type="match status" value="1"/>
</dbReference>
<dbReference type="PANTHER" id="PTHR43311:SF2">
    <property type="entry name" value="GLUTAMATE--TRNA LIGASE, MITOCHONDRIAL-RELATED"/>
    <property type="match status" value="1"/>
</dbReference>
<dbReference type="Pfam" id="PF19269">
    <property type="entry name" value="Anticodon_2"/>
    <property type="match status" value="1"/>
</dbReference>
<dbReference type="Pfam" id="PF00749">
    <property type="entry name" value="tRNA-synt_1c"/>
    <property type="match status" value="1"/>
</dbReference>
<dbReference type="PRINTS" id="PR00987">
    <property type="entry name" value="TRNASYNTHGLU"/>
</dbReference>
<dbReference type="SUPFAM" id="SSF48163">
    <property type="entry name" value="An anticodon-binding domain of class I aminoacyl-tRNA synthetases"/>
    <property type="match status" value="1"/>
</dbReference>
<dbReference type="SUPFAM" id="SSF52374">
    <property type="entry name" value="Nucleotidylyl transferase"/>
    <property type="match status" value="1"/>
</dbReference>
<dbReference type="PROSITE" id="PS00178">
    <property type="entry name" value="AA_TRNA_LIGASE_I"/>
    <property type="match status" value="1"/>
</dbReference>
<comment type="function">
    <text evidence="1">Catalyzes the attachment of glutamate to tRNA(Glu) in a two-step reaction: glutamate is first activated by ATP to form Glu-AMP and then transferred to the acceptor end of tRNA(Glu).</text>
</comment>
<comment type="catalytic activity">
    <reaction evidence="1">
        <text>tRNA(Glu) + L-glutamate + ATP = L-glutamyl-tRNA(Glu) + AMP + diphosphate</text>
        <dbReference type="Rhea" id="RHEA:23540"/>
        <dbReference type="Rhea" id="RHEA-COMP:9663"/>
        <dbReference type="Rhea" id="RHEA-COMP:9680"/>
        <dbReference type="ChEBI" id="CHEBI:29985"/>
        <dbReference type="ChEBI" id="CHEBI:30616"/>
        <dbReference type="ChEBI" id="CHEBI:33019"/>
        <dbReference type="ChEBI" id="CHEBI:78442"/>
        <dbReference type="ChEBI" id="CHEBI:78520"/>
        <dbReference type="ChEBI" id="CHEBI:456215"/>
        <dbReference type="EC" id="6.1.1.17"/>
    </reaction>
</comment>
<comment type="cofactor">
    <cofactor evidence="1">
        <name>Zn(2+)</name>
        <dbReference type="ChEBI" id="CHEBI:29105"/>
    </cofactor>
    <text evidence="1">Binds 1 zinc ion per subunit.</text>
</comment>
<comment type="subunit">
    <text evidence="1">Monomer.</text>
</comment>
<comment type="subcellular location">
    <subcellularLocation>
        <location evidence="1">Cytoplasm</location>
    </subcellularLocation>
</comment>
<comment type="similarity">
    <text evidence="1">Belongs to the class-I aminoacyl-tRNA synthetase family. Glutamate--tRNA ligase type 1 subfamily.</text>
</comment>
<feature type="chain" id="PRO_0000119573" description="Glutamate--tRNA ligase">
    <location>
        <begin position="1"/>
        <end position="480"/>
    </location>
</feature>
<feature type="short sequence motif" description="'HIGH' region" evidence="1">
    <location>
        <begin position="21"/>
        <end position="31"/>
    </location>
</feature>
<feature type="short sequence motif" description="'KMSKS' region" evidence="1">
    <location>
        <begin position="248"/>
        <end position="252"/>
    </location>
</feature>
<feature type="binding site" evidence="1">
    <location>
        <position position="110"/>
    </location>
    <ligand>
        <name>Zn(2+)</name>
        <dbReference type="ChEBI" id="CHEBI:29105"/>
    </ligand>
</feature>
<feature type="binding site" evidence="1">
    <location>
        <position position="112"/>
    </location>
    <ligand>
        <name>Zn(2+)</name>
        <dbReference type="ChEBI" id="CHEBI:29105"/>
    </ligand>
</feature>
<feature type="binding site" evidence="1">
    <location>
        <position position="137"/>
    </location>
    <ligand>
        <name>Zn(2+)</name>
        <dbReference type="ChEBI" id="CHEBI:29105"/>
    </ligand>
</feature>
<feature type="binding site" evidence="1">
    <location>
        <position position="139"/>
    </location>
    <ligand>
        <name>Zn(2+)</name>
        <dbReference type="ChEBI" id="CHEBI:29105"/>
    </ligand>
</feature>
<feature type="binding site" evidence="1">
    <location>
        <position position="251"/>
    </location>
    <ligand>
        <name>ATP</name>
        <dbReference type="ChEBI" id="CHEBI:30616"/>
    </ligand>
</feature>
<accession>Q4QNR5</accession>
<protein>
    <recommendedName>
        <fullName evidence="1">Glutamate--tRNA ligase</fullName>
        <ecNumber evidence="1">6.1.1.17</ecNumber>
    </recommendedName>
    <alternativeName>
        <fullName evidence="1">Glutamyl-tRNA synthetase</fullName>
        <shortName evidence="1">GluRS</shortName>
    </alternativeName>
</protein>
<name>SYE_HAEI8</name>
<organism>
    <name type="scientific">Haemophilus influenzae (strain 86-028NP)</name>
    <dbReference type="NCBI Taxonomy" id="281310"/>
    <lineage>
        <taxon>Bacteria</taxon>
        <taxon>Pseudomonadati</taxon>
        <taxon>Pseudomonadota</taxon>
        <taxon>Gammaproteobacteria</taxon>
        <taxon>Pasteurellales</taxon>
        <taxon>Pasteurellaceae</taxon>
        <taxon>Haemophilus</taxon>
    </lineage>
</organism>
<proteinExistence type="inferred from homology"/>
<keyword id="KW-0030">Aminoacyl-tRNA synthetase</keyword>
<keyword id="KW-0067">ATP-binding</keyword>
<keyword id="KW-0963">Cytoplasm</keyword>
<keyword id="KW-0436">Ligase</keyword>
<keyword id="KW-0479">Metal-binding</keyword>
<keyword id="KW-0547">Nucleotide-binding</keyword>
<keyword id="KW-0648">Protein biosynthesis</keyword>
<keyword id="KW-0862">Zinc</keyword>
<gene>
    <name evidence="1" type="primary">gltX</name>
    <name type="ordered locus">NTHI0382</name>
</gene>